<keyword id="KW-1185">Reference proteome</keyword>
<proteinExistence type="inferred from homology"/>
<name>Y1627_HAEIN</name>
<dbReference type="EMBL" id="L42023">
    <property type="protein sequence ID" value="AAC23274.1"/>
    <property type="molecule type" value="Genomic_DNA"/>
</dbReference>
<dbReference type="PIR" id="C64173">
    <property type="entry name" value="C64173"/>
</dbReference>
<dbReference type="RefSeq" id="NP_439769.1">
    <property type="nucleotide sequence ID" value="NC_000907.1"/>
</dbReference>
<dbReference type="SMR" id="P71394"/>
<dbReference type="STRING" id="71421.HI_1627"/>
<dbReference type="EnsemblBacteria" id="AAC23274">
    <property type="protein sequence ID" value="AAC23274"/>
    <property type="gene ID" value="HI_1627"/>
</dbReference>
<dbReference type="KEGG" id="hin:HI_1627"/>
<dbReference type="PATRIC" id="fig|71421.8.peg.1702"/>
<dbReference type="eggNOG" id="COG0251">
    <property type="taxonomic scope" value="Bacteria"/>
</dbReference>
<dbReference type="HOGENOM" id="CLU_100715_6_1_6"/>
<dbReference type="OrthoDB" id="6899345at2"/>
<dbReference type="PhylomeDB" id="P71394"/>
<dbReference type="BioCyc" id="HINF71421:G1GJ1-1640-MONOMER"/>
<dbReference type="Proteomes" id="UP000000579">
    <property type="component" value="Chromosome"/>
</dbReference>
<dbReference type="CDD" id="cd06150">
    <property type="entry name" value="YjgF_YER057c_UK114_like_2"/>
    <property type="match status" value="1"/>
</dbReference>
<dbReference type="Gene3D" id="3.30.1330.40">
    <property type="entry name" value="RutC-like"/>
    <property type="match status" value="1"/>
</dbReference>
<dbReference type="InterPro" id="IPR019897">
    <property type="entry name" value="RidA_CS"/>
</dbReference>
<dbReference type="InterPro" id="IPR035959">
    <property type="entry name" value="RutC-like_sf"/>
</dbReference>
<dbReference type="InterPro" id="IPR006175">
    <property type="entry name" value="YjgF/YER057c/UK114"/>
</dbReference>
<dbReference type="InterPro" id="IPR035709">
    <property type="entry name" value="YoaB-like"/>
</dbReference>
<dbReference type="PANTHER" id="PTHR47328">
    <property type="match status" value="1"/>
</dbReference>
<dbReference type="PANTHER" id="PTHR47328:SF1">
    <property type="entry name" value="RUTC FAMILY PROTEIN YOAB"/>
    <property type="match status" value="1"/>
</dbReference>
<dbReference type="Pfam" id="PF01042">
    <property type="entry name" value="Ribonuc_L-PSP"/>
    <property type="match status" value="1"/>
</dbReference>
<dbReference type="SUPFAM" id="SSF55298">
    <property type="entry name" value="YjgF-like"/>
    <property type="match status" value="1"/>
</dbReference>
<dbReference type="PROSITE" id="PS01094">
    <property type="entry name" value="UPF0076"/>
    <property type="match status" value="1"/>
</dbReference>
<feature type="chain" id="PRO_0000170335" description="RutC family protein HI_1627">
    <location>
        <begin position="1"/>
        <end position="116"/>
    </location>
</feature>
<sequence length="116" mass="13001">MTIQRILPSARLSEVSIHNNLAYFAGQVPELTIEQNAYEQTKEVLGLIDKLLAKIGSNKSNILTAQIFLADMKDYAQLNQAWDEWVDHVSPPSRATVEAKLADPHWKVEIVIIATC</sequence>
<protein>
    <recommendedName>
        <fullName>RutC family protein HI_1627</fullName>
    </recommendedName>
</protein>
<evidence type="ECO:0000305" key="1"/>
<gene>
    <name type="ordered locus">HI_1627</name>
</gene>
<reference key="1">
    <citation type="journal article" date="1995" name="Science">
        <title>Whole-genome random sequencing and assembly of Haemophilus influenzae Rd.</title>
        <authorList>
            <person name="Fleischmann R.D."/>
            <person name="Adams M.D."/>
            <person name="White O."/>
            <person name="Clayton R.A."/>
            <person name="Kirkness E.F."/>
            <person name="Kerlavage A.R."/>
            <person name="Bult C.J."/>
            <person name="Tomb J.-F."/>
            <person name="Dougherty B.A."/>
            <person name="Merrick J.M."/>
            <person name="McKenney K."/>
            <person name="Sutton G.G."/>
            <person name="FitzHugh W."/>
            <person name="Fields C.A."/>
            <person name="Gocayne J.D."/>
            <person name="Scott J.D."/>
            <person name="Shirley R."/>
            <person name="Liu L.-I."/>
            <person name="Glodek A."/>
            <person name="Kelley J.M."/>
            <person name="Weidman J.F."/>
            <person name="Phillips C.A."/>
            <person name="Spriggs T."/>
            <person name="Hedblom E."/>
            <person name="Cotton M.D."/>
            <person name="Utterback T.R."/>
            <person name="Hanna M.C."/>
            <person name="Nguyen D.T."/>
            <person name="Saudek D.M."/>
            <person name="Brandon R.C."/>
            <person name="Fine L.D."/>
            <person name="Fritchman J.L."/>
            <person name="Fuhrmann J.L."/>
            <person name="Geoghagen N.S.M."/>
            <person name="Gnehm C.L."/>
            <person name="McDonald L.A."/>
            <person name="Small K.V."/>
            <person name="Fraser C.M."/>
            <person name="Smith H.O."/>
            <person name="Venter J.C."/>
        </authorList>
    </citation>
    <scope>NUCLEOTIDE SEQUENCE [LARGE SCALE GENOMIC DNA]</scope>
    <source>
        <strain>ATCC 51907 / DSM 11121 / KW20 / Rd</strain>
    </source>
</reference>
<organism>
    <name type="scientific">Haemophilus influenzae (strain ATCC 51907 / DSM 11121 / KW20 / Rd)</name>
    <dbReference type="NCBI Taxonomy" id="71421"/>
    <lineage>
        <taxon>Bacteria</taxon>
        <taxon>Pseudomonadati</taxon>
        <taxon>Pseudomonadota</taxon>
        <taxon>Gammaproteobacteria</taxon>
        <taxon>Pasteurellales</taxon>
        <taxon>Pasteurellaceae</taxon>
        <taxon>Haemophilus</taxon>
    </lineage>
</organism>
<accession>P71394</accession>
<comment type="similarity">
    <text evidence="1">Belongs to the RutC family.</text>
</comment>